<reference key="1">
    <citation type="journal article" date="2005" name="Genome Res.">
        <title>Coping with cold: the genome of the versatile marine Antarctica bacterium Pseudoalteromonas haloplanktis TAC125.</title>
        <authorList>
            <person name="Medigue C."/>
            <person name="Krin E."/>
            <person name="Pascal G."/>
            <person name="Barbe V."/>
            <person name="Bernsel A."/>
            <person name="Bertin P.N."/>
            <person name="Cheung F."/>
            <person name="Cruveiller S."/>
            <person name="D'Amico S."/>
            <person name="Duilio A."/>
            <person name="Fang G."/>
            <person name="Feller G."/>
            <person name="Ho C."/>
            <person name="Mangenot S."/>
            <person name="Marino G."/>
            <person name="Nilsson J."/>
            <person name="Parrilli E."/>
            <person name="Rocha E.P.C."/>
            <person name="Rouy Z."/>
            <person name="Sekowska A."/>
            <person name="Tutino M.L."/>
            <person name="Vallenet D."/>
            <person name="von Heijne G."/>
            <person name="Danchin A."/>
        </authorList>
    </citation>
    <scope>NUCLEOTIDE SEQUENCE [LARGE SCALE GENOMIC DNA]</scope>
    <source>
        <strain>TAC 125</strain>
    </source>
</reference>
<sequence>MTINRKPIFRRVLLKLSGEALMGDEGFGIDPKVLDRMAQEIKELVELDVEVGLVIGGGNFLRGGSLAEAGMNRVVGDHMGMLATVMNGLAMRDALHRAFVNCRLMSAIPLHGMCDAYNWAEAISLLKTGRVVIFAAGTGNPFFTTDSAACLRGIEIEADTVIKATKVDGVYSDDPVKNPDATLYRHLSYNEIIEKELKVMDLAAFTLARDHNMPLSVFNMNKSGALKRVIMGEEEGTLISSQASDEVIK</sequence>
<evidence type="ECO:0000255" key="1">
    <source>
        <dbReference type="HAMAP-Rule" id="MF_01220"/>
    </source>
</evidence>
<comment type="function">
    <text evidence="1">Catalyzes the reversible phosphorylation of UMP to UDP.</text>
</comment>
<comment type="catalytic activity">
    <reaction evidence="1">
        <text>UMP + ATP = UDP + ADP</text>
        <dbReference type="Rhea" id="RHEA:24400"/>
        <dbReference type="ChEBI" id="CHEBI:30616"/>
        <dbReference type="ChEBI" id="CHEBI:57865"/>
        <dbReference type="ChEBI" id="CHEBI:58223"/>
        <dbReference type="ChEBI" id="CHEBI:456216"/>
        <dbReference type="EC" id="2.7.4.22"/>
    </reaction>
</comment>
<comment type="activity regulation">
    <text evidence="1">Allosterically activated by GTP. Inhibited by UTP.</text>
</comment>
<comment type="pathway">
    <text evidence="1">Pyrimidine metabolism; CTP biosynthesis via de novo pathway; UDP from UMP (UMPK route): step 1/1.</text>
</comment>
<comment type="subunit">
    <text evidence="1">Homohexamer.</text>
</comment>
<comment type="subcellular location">
    <subcellularLocation>
        <location evidence="1">Cytoplasm</location>
    </subcellularLocation>
</comment>
<comment type="similarity">
    <text evidence="1">Belongs to the UMP kinase family.</text>
</comment>
<gene>
    <name evidence="1" type="primary">pyrH</name>
    <name type="ordered locus">PSHAa2034</name>
</gene>
<keyword id="KW-0021">Allosteric enzyme</keyword>
<keyword id="KW-0067">ATP-binding</keyword>
<keyword id="KW-0963">Cytoplasm</keyword>
<keyword id="KW-0418">Kinase</keyword>
<keyword id="KW-0547">Nucleotide-binding</keyword>
<keyword id="KW-0665">Pyrimidine biosynthesis</keyword>
<keyword id="KW-1185">Reference proteome</keyword>
<keyword id="KW-0808">Transferase</keyword>
<dbReference type="EC" id="2.7.4.22" evidence="1"/>
<dbReference type="EMBL" id="CR954246">
    <property type="protein sequence ID" value="CAI87090.1"/>
    <property type="molecule type" value="Genomic_DNA"/>
</dbReference>
<dbReference type="SMR" id="Q3IIX6"/>
<dbReference type="STRING" id="326442.PSHAa2034"/>
<dbReference type="KEGG" id="pha:PSHAa2034"/>
<dbReference type="PATRIC" id="fig|326442.8.peg.1962"/>
<dbReference type="eggNOG" id="COG0528">
    <property type="taxonomic scope" value="Bacteria"/>
</dbReference>
<dbReference type="HOGENOM" id="CLU_033861_0_0_6"/>
<dbReference type="BioCyc" id="PHAL326442:PSHA_RS10050-MONOMER"/>
<dbReference type="UniPathway" id="UPA00159">
    <property type="reaction ID" value="UER00275"/>
</dbReference>
<dbReference type="Proteomes" id="UP000006843">
    <property type="component" value="Chromosome I"/>
</dbReference>
<dbReference type="GO" id="GO:0005829">
    <property type="term" value="C:cytosol"/>
    <property type="evidence" value="ECO:0007669"/>
    <property type="project" value="TreeGrafter"/>
</dbReference>
<dbReference type="GO" id="GO:0005524">
    <property type="term" value="F:ATP binding"/>
    <property type="evidence" value="ECO:0007669"/>
    <property type="project" value="UniProtKB-KW"/>
</dbReference>
<dbReference type="GO" id="GO:0033862">
    <property type="term" value="F:UMP kinase activity"/>
    <property type="evidence" value="ECO:0007669"/>
    <property type="project" value="UniProtKB-EC"/>
</dbReference>
<dbReference type="GO" id="GO:0044210">
    <property type="term" value="P:'de novo' CTP biosynthetic process"/>
    <property type="evidence" value="ECO:0007669"/>
    <property type="project" value="UniProtKB-UniRule"/>
</dbReference>
<dbReference type="GO" id="GO:0006225">
    <property type="term" value="P:UDP biosynthetic process"/>
    <property type="evidence" value="ECO:0007669"/>
    <property type="project" value="TreeGrafter"/>
</dbReference>
<dbReference type="CDD" id="cd04254">
    <property type="entry name" value="AAK_UMPK-PyrH-Ec"/>
    <property type="match status" value="1"/>
</dbReference>
<dbReference type="FunFam" id="3.40.1160.10:FF:000001">
    <property type="entry name" value="Uridylate kinase"/>
    <property type="match status" value="1"/>
</dbReference>
<dbReference type="Gene3D" id="3.40.1160.10">
    <property type="entry name" value="Acetylglutamate kinase-like"/>
    <property type="match status" value="1"/>
</dbReference>
<dbReference type="HAMAP" id="MF_01220_B">
    <property type="entry name" value="PyrH_B"/>
    <property type="match status" value="1"/>
</dbReference>
<dbReference type="InterPro" id="IPR036393">
    <property type="entry name" value="AceGlu_kinase-like_sf"/>
</dbReference>
<dbReference type="InterPro" id="IPR001048">
    <property type="entry name" value="Asp/Glu/Uridylate_kinase"/>
</dbReference>
<dbReference type="InterPro" id="IPR011817">
    <property type="entry name" value="Uridylate_kinase"/>
</dbReference>
<dbReference type="InterPro" id="IPR015963">
    <property type="entry name" value="Uridylate_kinase_bac"/>
</dbReference>
<dbReference type="NCBIfam" id="TIGR02075">
    <property type="entry name" value="pyrH_bact"/>
    <property type="match status" value="1"/>
</dbReference>
<dbReference type="PANTHER" id="PTHR42833">
    <property type="entry name" value="URIDYLATE KINASE"/>
    <property type="match status" value="1"/>
</dbReference>
<dbReference type="PANTHER" id="PTHR42833:SF4">
    <property type="entry name" value="URIDYLATE KINASE PUMPKIN, CHLOROPLASTIC"/>
    <property type="match status" value="1"/>
</dbReference>
<dbReference type="Pfam" id="PF00696">
    <property type="entry name" value="AA_kinase"/>
    <property type="match status" value="1"/>
</dbReference>
<dbReference type="PIRSF" id="PIRSF005650">
    <property type="entry name" value="Uridylate_kin"/>
    <property type="match status" value="1"/>
</dbReference>
<dbReference type="SUPFAM" id="SSF53633">
    <property type="entry name" value="Carbamate kinase-like"/>
    <property type="match status" value="1"/>
</dbReference>
<name>PYRH_PSET1</name>
<organism>
    <name type="scientific">Pseudoalteromonas translucida (strain TAC 125)</name>
    <dbReference type="NCBI Taxonomy" id="326442"/>
    <lineage>
        <taxon>Bacteria</taxon>
        <taxon>Pseudomonadati</taxon>
        <taxon>Pseudomonadota</taxon>
        <taxon>Gammaproteobacteria</taxon>
        <taxon>Alteromonadales</taxon>
        <taxon>Pseudoalteromonadaceae</taxon>
        <taxon>Pseudoalteromonas</taxon>
    </lineage>
</organism>
<accession>Q3IIX6</accession>
<proteinExistence type="inferred from homology"/>
<feature type="chain" id="PRO_1000053984" description="Uridylate kinase">
    <location>
        <begin position="1"/>
        <end position="249"/>
    </location>
</feature>
<feature type="region of interest" description="Involved in allosteric activation by GTP" evidence="1">
    <location>
        <begin position="23"/>
        <end position="28"/>
    </location>
</feature>
<feature type="binding site" evidence="1">
    <location>
        <begin position="15"/>
        <end position="18"/>
    </location>
    <ligand>
        <name>ATP</name>
        <dbReference type="ChEBI" id="CHEBI:30616"/>
    </ligand>
</feature>
<feature type="binding site" evidence="1">
    <location>
        <position position="57"/>
    </location>
    <ligand>
        <name>UMP</name>
        <dbReference type="ChEBI" id="CHEBI:57865"/>
    </ligand>
</feature>
<feature type="binding site" evidence="1">
    <location>
        <position position="58"/>
    </location>
    <ligand>
        <name>ATP</name>
        <dbReference type="ChEBI" id="CHEBI:30616"/>
    </ligand>
</feature>
<feature type="binding site" evidence="1">
    <location>
        <position position="62"/>
    </location>
    <ligand>
        <name>ATP</name>
        <dbReference type="ChEBI" id="CHEBI:30616"/>
    </ligand>
</feature>
<feature type="binding site" evidence="1">
    <location>
        <position position="77"/>
    </location>
    <ligand>
        <name>UMP</name>
        <dbReference type="ChEBI" id="CHEBI:57865"/>
    </ligand>
</feature>
<feature type="binding site" evidence="1">
    <location>
        <begin position="138"/>
        <end position="145"/>
    </location>
    <ligand>
        <name>UMP</name>
        <dbReference type="ChEBI" id="CHEBI:57865"/>
    </ligand>
</feature>
<feature type="binding site" evidence="1">
    <location>
        <position position="165"/>
    </location>
    <ligand>
        <name>ATP</name>
        <dbReference type="ChEBI" id="CHEBI:30616"/>
    </ligand>
</feature>
<feature type="binding site" evidence="1">
    <location>
        <position position="171"/>
    </location>
    <ligand>
        <name>ATP</name>
        <dbReference type="ChEBI" id="CHEBI:30616"/>
    </ligand>
</feature>
<feature type="binding site" evidence="1">
    <location>
        <position position="174"/>
    </location>
    <ligand>
        <name>ATP</name>
        <dbReference type="ChEBI" id="CHEBI:30616"/>
    </ligand>
</feature>
<protein>
    <recommendedName>
        <fullName evidence="1">Uridylate kinase</fullName>
        <shortName evidence="1">UK</shortName>
        <ecNumber evidence="1">2.7.4.22</ecNumber>
    </recommendedName>
    <alternativeName>
        <fullName evidence="1">Uridine monophosphate kinase</fullName>
        <shortName evidence="1">UMP kinase</shortName>
        <shortName evidence="1">UMPK</shortName>
    </alternativeName>
</protein>